<keyword id="KW-0968">Cytoplasmic vesicle</keyword>
<keyword id="KW-0256">Endoplasmic reticulum</keyword>
<keyword id="KW-0325">Glycoprotein</keyword>
<keyword id="KW-0333">Golgi apparatus</keyword>
<keyword id="KW-0413">Isomerase</keyword>
<keyword id="KW-0464">Manganese</keyword>
<keyword id="KW-0472">Membrane</keyword>
<keyword id="KW-0479">Metal-binding</keyword>
<keyword id="KW-0492">Microsome</keyword>
<keyword id="KW-1185">Reference proteome</keyword>
<keyword id="KW-0732">Signal</keyword>
<keyword id="KW-0812">Transmembrane</keyword>
<keyword id="KW-1133">Transmembrane helix</keyword>
<comment type="function">
    <text evidence="3">Converts D-glucuronic acid to L-iduronic acid (IdoUA) residues. Plays an important role in the biosynthesis of the glycosaminoglycan/mucopolysaccharide dermatan sulfate.</text>
</comment>
<comment type="catalytic activity">
    <reaction evidence="5">
        <text>chondroitin 4'-sulfate = dermatan 4'-sulfate</text>
        <dbReference type="Rhea" id="RHEA:21084"/>
        <dbReference type="Rhea" id="RHEA-COMP:9829"/>
        <dbReference type="Rhea" id="RHEA-COMP:9965"/>
        <dbReference type="ChEBI" id="CHEBI:58422"/>
        <dbReference type="ChEBI" id="CHEBI:58465"/>
        <dbReference type="EC" id="5.1.3.19"/>
    </reaction>
</comment>
<comment type="cofactor">
    <cofactor evidence="1">
        <name>Mn(2+)</name>
        <dbReference type="ChEBI" id="CHEBI:29035"/>
    </cofactor>
    <text evidence="1">Also has weak activity in the presence of Mg(2+) or Ca(2+) ions.</text>
</comment>
<comment type="pathway">
    <text evidence="5">Glycan metabolism; chondroitin sulfate biosynthesis.</text>
</comment>
<comment type="pathway">
    <text evidence="5">Glycan metabolism; heparan sulfate biosynthesis.</text>
</comment>
<comment type="subcellular location">
    <subcellularLocation>
        <location evidence="5">Endoplasmic reticulum membrane</location>
        <topology evidence="1">Multi-pass membrane protein</topology>
    </subcellularLocation>
    <subcellularLocation>
        <location evidence="1">Golgi apparatus membrane</location>
        <topology evidence="1">Multi-pass membrane protein</topology>
    </subcellularLocation>
    <subcellularLocation>
        <location evidence="1">Cytoplasmic vesicle membrane</location>
        <topology evidence="1">Multi-pass membrane protein</topology>
    </subcellularLocation>
    <subcellularLocation>
        <location evidence="3">Microsome membrane</location>
        <topology evidence="1">Multi-pass membrane protein</topology>
    </subcellularLocation>
</comment>
<comment type="PTM">
    <text evidence="1">N-glycosylated. Glycosylation is important for enzymatic activity.</text>
</comment>
<comment type="similarity">
    <text evidence="4">Belongs to the dermatan-sulfate isomerase family.</text>
</comment>
<sequence length="958" mass="109725">MRTHTRGAPSVFFICLFCFVSACVTDENPEVMIPFTNANYDSHPMLYFSRAEVAELQLRAASSHEHIAARLTEAVNTMLSSPLEYLPPWDPKEYSARWNEIYGNNLGALAMFCVLYPENMEARDMAKDYMERMAAQPSWLVKDAPWDEVPLAHSLVGFATAYDFLYNYLSKTQQEKFLEVIANASGYMYETSYRRGWGFQYLHNHQPTNCMALLTGSLVLMNQGYLQEAYLWTKQVLTIMEKSLVLLREVTDGSLYEGVAYGSYTTRSLFQYMFLVQRHFDINHFGHPWLKQHFAFMYRTILPGFQRTVAIADSNYNWFYGPESQLVFLDKFVMRNGSGNWLADQIRRNRVVEGPGTPSKGQRWCTLHTEFLWYDASLKSVPPPDFGTPTLHYFEDWGVVTYGSALPAEINRSFLSFKSGKLGGRAIYDIVHRNKYKDWIKGWRNFNAGHEHPDQNSFTFAPNGVPFITEALYGPKYTFFNNVLMFSPAASKSCFSPWEGQVTEDCSSKWSKYKHDPAASCQGRVVAAVEKNGVVFIRGEGVGAYNPQLHLRNVQRNLILLHPQLLLLVDQIHLGEDSPLERAASFFHNVDFPFEETVVDGVHGALIRQRDGLYKMYWMDDTGYSEKGTFASVTYPRGYPYNGTNYVNVTTHLRSPVTRAAYLFIGPSIDVQSFSIHGDAQQLDVFVATSEHAYATYLWTGETAGQSAFAQVIADRQKILFDRSSAIRSSVVPEVKDYAALVEQNLQHFKPVFQLLEKQILSRVRNTASFRKTAERLLRFSDKRQTEEAIDRIFAISQQQQQQQSKSKKNRRGGKRYKFVDAVPDIFAQIEVNERKVRQKAQILAQKELPVDEDEEMKDLLDFADITYEKHKNGDVMNGRFGQARMVTTHSRAPALSASYTRLFLILNIAIFFVMLAMQLTYFQRAQSLHGQRCLYAVLLIDSCILLWLYSSCSQSQC</sequence>
<organism>
    <name type="scientific">Bos taurus</name>
    <name type="common">Bovine</name>
    <dbReference type="NCBI Taxonomy" id="9913"/>
    <lineage>
        <taxon>Eukaryota</taxon>
        <taxon>Metazoa</taxon>
        <taxon>Chordata</taxon>
        <taxon>Craniata</taxon>
        <taxon>Vertebrata</taxon>
        <taxon>Euteleostomi</taxon>
        <taxon>Mammalia</taxon>
        <taxon>Eutheria</taxon>
        <taxon>Laurasiatheria</taxon>
        <taxon>Artiodactyla</taxon>
        <taxon>Ruminantia</taxon>
        <taxon>Pecora</taxon>
        <taxon>Bovidae</taxon>
        <taxon>Bovinae</taxon>
        <taxon>Bos</taxon>
    </lineage>
</organism>
<protein>
    <recommendedName>
        <fullName>Dermatan-sulfate epimerase</fullName>
        <shortName>DS epimerase</shortName>
        <ecNumber evidence="5">5.1.3.19</ecNumber>
    </recommendedName>
    <alternativeName>
        <fullName>Chondroitin-glucuronate 5-epimerase</fullName>
    </alternativeName>
</protein>
<reference key="1">
    <citation type="journal article" date="2009" name="Science">
        <title>The genome sequence of taurine cattle: a window to ruminant biology and evolution.</title>
        <authorList>
            <consortium name="The bovine genome sequencing and analysis consortium"/>
        </authorList>
    </citation>
    <scope>NUCLEOTIDE SEQUENCE [LARGE SCALE GENOMIC DNA]</scope>
    <source>
        <strain>Hereford</strain>
    </source>
</reference>
<reference key="2">
    <citation type="journal article" date="2006" name="J. Biol. Chem.">
        <title>Biosynthesis of dermatan sulfate: chondroitin-glucuronate C5-epimerase is identical to SART2.</title>
        <authorList>
            <person name="Maccarana M."/>
            <person name="Olander B."/>
            <person name="Malmstroem J."/>
            <person name="Tiedemann K."/>
            <person name="Aebersold R."/>
            <person name="Lindahl U."/>
            <person name="Li J.-P."/>
            <person name="Malmstroem A."/>
        </authorList>
    </citation>
    <scope>FUNCTION</scope>
    <scope>CATALYTIC ACTIVITY</scope>
    <scope>PATHWAY</scope>
    <scope>SUBCELLULAR LOCATION</scope>
    <scope>IDENTIFICATION BY MASS SPECTROMETRY</scope>
    <source>
        <tissue>Spleen</tissue>
    </source>
</reference>
<dbReference type="EC" id="5.1.3.19" evidence="5"/>
<dbReference type="SMR" id="P0C2H4"/>
<dbReference type="FunCoup" id="P0C2H4">
    <property type="interactions" value="448"/>
</dbReference>
<dbReference type="STRING" id="9913.ENSBTAP00000069744"/>
<dbReference type="GlyCosmos" id="P0C2H4">
    <property type="glycosylation" value="5 sites, No reported glycans"/>
</dbReference>
<dbReference type="GlyGen" id="P0C2H4">
    <property type="glycosylation" value="5 sites"/>
</dbReference>
<dbReference type="PaxDb" id="9913-ENSBTAP00000006855"/>
<dbReference type="eggNOG" id="ENOG502QPWZ">
    <property type="taxonomic scope" value="Eukaryota"/>
</dbReference>
<dbReference type="HOGENOM" id="CLU_308813_0_0_1"/>
<dbReference type="InParanoid" id="P0C2H4"/>
<dbReference type="OrthoDB" id="5946629at2759"/>
<dbReference type="UniPathway" id="UPA00755"/>
<dbReference type="UniPathway" id="UPA00756"/>
<dbReference type="Proteomes" id="UP000009136">
    <property type="component" value="Unplaced"/>
</dbReference>
<dbReference type="GO" id="GO:0030659">
    <property type="term" value="C:cytoplasmic vesicle membrane"/>
    <property type="evidence" value="ECO:0007669"/>
    <property type="project" value="UniProtKB-SubCell"/>
</dbReference>
<dbReference type="GO" id="GO:0005783">
    <property type="term" value="C:endoplasmic reticulum"/>
    <property type="evidence" value="ECO:0000250"/>
    <property type="project" value="HGNC-UCL"/>
</dbReference>
<dbReference type="GO" id="GO:0005789">
    <property type="term" value="C:endoplasmic reticulum membrane"/>
    <property type="evidence" value="ECO:0007669"/>
    <property type="project" value="UniProtKB-SubCell"/>
</dbReference>
<dbReference type="GO" id="GO:0005794">
    <property type="term" value="C:Golgi apparatus"/>
    <property type="evidence" value="ECO:0000250"/>
    <property type="project" value="HGNC-UCL"/>
</dbReference>
<dbReference type="GO" id="GO:0000139">
    <property type="term" value="C:Golgi membrane"/>
    <property type="evidence" value="ECO:0007669"/>
    <property type="project" value="UniProtKB-SubCell"/>
</dbReference>
<dbReference type="GO" id="GO:0047757">
    <property type="term" value="F:chondroitin-glucuronate 5-epimerase activity"/>
    <property type="evidence" value="ECO:0000314"/>
    <property type="project" value="HGNC-UCL"/>
</dbReference>
<dbReference type="GO" id="GO:0046872">
    <property type="term" value="F:metal ion binding"/>
    <property type="evidence" value="ECO:0007669"/>
    <property type="project" value="UniProtKB-KW"/>
</dbReference>
<dbReference type="GO" id="GO:0015012">
    <property type="term" value="P:heparan sulfate proteoglycan biosynthetic process"/>
    <property type="evidence" value="ECO:0007669"/>
    <property type="project" value="UniProtKB-UniPathway"/>
</dbReference>
<dbReference type="FunFam" id="1.50.10.100:FF:000001">
    <property type="entry name" value="dermatan-sulfate epimerase isoform X1"/>
    <property type="match status" value="1"/>
</dbReference>
<dbReference type="FunFam" id="2.70.98.70:FF:000001">
    <property type="entry name" value="dermatan-sulfate epimerase isoform X1"/>
    <property type="match status" value="1"/>
</dbReference>
<dbReference type="Gene3D" id="2.70.98.70">
    <property type="match status" value="1"/>
</dbReference>
<dbReference type="Gene3D" id="1.50.10.100">
    <property type="entry name" value="Chondroitin AC/alginate lyase"/>
    <property type="match status" value="1"/>
</dbReference>
<dbReference type="InterPro" id="IPR008929">
    <property type="entry name" value="Chondroitin_lyas"/>
</dbReference>
<dbReference type="InterPro" id="IPR052447">
    <property type="entry name" value="Dermatan-Sulfate_Isomerase"/>
</dbReference>
<dbReference type="InterPro" id="IPR032518">
    <property type="entry name" value="HepII_N"/>
</dbReference>
<dbReference type="PANTHER" id="PTHR15532">
    <property type="match status" value="1"/>
</dbReference>
<dbReference type="PANTHER" id="PTHR15532:SF3">
    <property type="entry name" value="DERMATAN-SULFATE EPIMERASE"/>
    <property type="match status" value="1"/>
</dbReference>
<dbReference type="Pfam" id="PF16332">
    <property type="entry name" value="DUF4962"/>
    <property type="match status" value="1"/>
</dbReference>
<dbReference type="SUPFAM" id="SSF48230">
    <property type="entry name" value="Chondroitin AC/alginate lyase"/>
    <property type="match status" value="1"/>
</dbReference>
<feature type="signal peptide" evidence="2">
    <location>
        <begin position="1"/>
        <end position="22"/>
    </location>
</feature>
<feature type="chain" id="PRO_0000278287" description="Dermatan-sulfate epimerase">
    <location>
        <begin position="23"/>
        <end position="958"/>
    </location>
</feature>
<feature type="topological domain" description="Lumenal" evidence="4">
    <location>
        <begin position="23"/>
        <end position="902"/>
    </location>
</feature>
<feature type="transmembrane region" description="Helical" evidence="2">
    <location>
        <begin position="903"/>
        <end position="923"/>
    </location>
</feature>
<feature type="topological domain" description="Cytoplasmic" evidence="4">
    <location>
        <begin position="924"/>
        <end position="933"/>
    </location>
</feature>
<feature type="transmembrane region" description="Helical" evidence="2">
    <location>
        <begin position="934"/>
        <end position="954"/>
    </location>
</feature>
<feature type="topological domain" description="Lumenal" evidence="4">
    <location>
        <begin position="955"/>
        <end position="958"/>
    </location>
</feature>
<feature type="active site" description="Proton donor" evidence="1">
    <location>
        <position position="205"/>
    </location>
</feature>
<feature type="active site" evidence="1">
    <location>
        <position position="261"/>
    </location>
</feature>
<feature type="active site" evidence="1">
    <location>
        <position position="473"/>
    </location>
</feature>
<feature type="binding site" evidence="1">
    <location>
        <position position="452"/>
    </location>
    <ligand>
        <name>Mn(2+)</name>
        <dbReference type="ChEBI" id="CHEBI:29035"/>
    </ligand>
</feature>
<feature type="binding site" evidence="1">
    <location>
        <position position="470"/>
    </location>
    <ligand>
        <name>Mn(2+)</name>
        <dbReference type="ChEBI" id="CHEBI:29035"/>
    </ligand>
</feature>
<feature type="binding site" evidence="1">
    <location>
        <position position="481"/>
    </location>
    <ligand>
        <name>Mn(2+)</name>
        <dbReference type="ChEBI" id="CHEBI:29035"/>
    </ligand>
</feature>
<feature type="site" description="Critical for catalysis" evidence="1">
    <location>
        <position position="450"/>
    </location>
</feature>
<feature type="glycosylation site" description="N-linked (GlcNAc...) asparagine" evidence="2">
    <location>
        <position position="183"/>
    </location>
</feature>
<feature type="glycosylation site" description="N-linked (GlcNAc...) asparagine" evidence="2">
    <location>
        <position position="336"/>
    </location>
</feature>
<feature type="glycosylation site" description="N-linked (GlcNAc...) asparagine" evidence="2">
    <location>
        <position position="411"/>
    </location>
</feature>
<feature type="glycosylation site" description="N-linked (GlcNAc...) asparagine" evidence="2">
    <location>
        <position position="642"/>
    </location>
</feature>
<feature type="glycosylation site" description="N-linked (GlcNAc...) asparagine" evidence="2">
    <location>
        <position position="648"/>
    </location>
</feature>
<accession>P0C2H4</accession>
<gene>
    <name type="primary">DSE</name>
</gene>
<name>DSE_BOVIN</name>
<proteinExistence type="evidence at protein level"/>
<evidence type="ECO:0000250" key="1">
    <source>
        <dbReference type="UniProtKB" id="Q9UL01"/>
    </source>
</evidence>
<evidence type="ECO:0000255" key="2"/>
<evidence type="ECO:0000269" key="3">
    <source>
    </source>
</evidence>
<evidence type="ECO:0000305" key="4"/>
<evidence type="ECO:0000305" key="5">
    <source>
    </source>
</evidence>